<comment type="function">
    <text evidence="1 2">Virulence factor that is important for the establishment of infection in the host. EsxB is required for EsxA synthesis as well as secretion (By similarity). Mediates together with EsxA the release of S.aureus from the host cell. Also inhibits host cytokine production and thus modulates dendritic cell-mediated immunity (By similarity).</text>
</comment>
<comment type="subunit">
    <text evidence="3">Homodimer (PubMed:18773907). When mixed with EsxA does not form heterodimers (PubMed:18773907).</text>
</comment>
<comment type="subcellular location">
    <subcellularLocation>
        <location evidence="2">Secreted</location>
    </subcellularLocation>
    <text evidence="2">Secreted via the ESAT-6 secretion system (Ess) / type VII secretion system (T7SS).</text>
</comment>
<comment type="similarity">
    <text evidence="5">Belongs to the WXG100 family.</text>
</comment>
<keyword id="KW-1185">Reference proteome</keyword>
<keyword id="KW-0964">Secreted</keyword>
<keyword id="KW-0843">Virulence</keyword>
<reference key="1">
    <citation type="book" date="2006" name="Gram positive pathogens, 2nd edition">
        <title>The Staphylococcus aureus NCTC 8325 genome.</title>
        <editorList>
            <person name="Fischetti V."/>
            <person name="Novick R."/>
            <person name="Ferretti J."/>
            <person name="Portnoy D."/>
            <person name="Rood J."/>
        </editorList>
        <authorList>
            <person name="Gillaspy A.F."/>
            <person name="Worrell V."/>
            <person name="Orvis J."/>
            <person name="Roe B.A."/>
            <person name="Dyer D.W."/>
            <person name="Iandolo J.J."/>
        </authorList>
    </citation>
    <scope>NUCLEOTIDE SEQUENCE [LARGE SCALE GENOMIC DNA]</scope>
    <source>
        <strain>NCTC 8325 / PS 47</strain>
    </source>
</reference>
<reference key="2">
    <citation type="journal article" date="2008" name="J. Mol. Biol.">
        <title>Structure of Staphylococcus aureus EsxA suggests a contribution to virulence by action as a transport chaperone and/or adaptor protein.</title>
        <authorList>
            <person name="Sundaramoorthy R."/>
            <person name="Fyfe P.K."/>
            <person name="Hunter W.N."/>
        </authorList>
    </citation>
    <scope>SUBUNIT</scope>
    <source>
        <strain>ATCC 35556 / SA113</strain>
    </source>
</reference>
<evidence type="ECO:0000250" key="1">
    <source>
        <dbReference type="UniProtKB" id="A0A0H2XIE9"/>
    </source>
</evidence>
<evidence type="ECO:0000250" key="2">
    <source>
        <dbReference type="UniProtKB" id="P0C047"/>
    </source>
</evidence>
<evidence type="ECO:0000269" key="3">
    <source>
    </source>
</evidence>
<evidence type="ECO:0000303" key="4">
    <source>
    </source>
</evidence>
<evidence type="ECO:0000305" key="5"/>
<accession>Q2G182</accession>
<gene>
    <name evidence="4" type="primary">esxB</name>
    <name type="ordered locus">SAOUHSC_00265</name>
</gene>
<dbReference type="EMBL" id="CP000253">
    <property type="protein sequence ID" value="ABD29438.1"/>
    <property type="molecule type" value="Genomic_DNA"/>
</dbReference>
<dbReference type="RefSeq" id="WP_000509668.1">
    <property type="nucleotide sequence ID" value="NZ_LS483365.1"/>
</dbReference>
<dbReference type="RefSeq" id="YP_498858.1">
    <property type="nucleotide sequence ID" value="NC_007795.1"/>
</dbReference>
<dbReference type="SMR" id="Q2G182"/>
<dbReference type="STRING" id="93061.SAOUHSC_00265"/>
<dbReference type="GeneID" id="3919206"/>
<dbReference type="GeneID" id="66838592"/>
<dbReference type="KEGG" id="sao:SAOUHSC_00265"/>
<dbReference type="PATRIC" id="fig|93061.5.peg.243"/>
<dbReference type="HOGENOM" id="CLU_2248426_0_0_9"/>
<dbReference type="OrthoDB" id="9984299at2"/>
<dbReference type="PRO" id="PR:Q2G182"/>
<dbReference type="Proteomes" id="UP000008816">
    <property type="component" value="Chromosome"/>
</dbReference>
<dbReference type="GO" id="GO:0005576">
    <property type="term" value="C:extracellular region"/>
    <property type="evidence" value="ECO:0007669"/>
    <property type="project" value="UniProtKB-SubCell"/>
</dbReference>
<dbReference type="InterPro" id="IPR036689">
    <property type="entry name" value="ESAT-6-like_sf"/>
</dbReference>
<dbReference type="InterPro" id="IPR010310">
    <property type="entry name" value="T7SS_ESAT-6-like"/>
</dbReference>
<dbReference type="Pfam" id="PF06013">
    <property type="entry name" value="WXG100"/>
    <property type="match status" value="1"/>
</dbReference>
<dbReference type="SUPFAM" id="SSF140453">
    <property type="entry name" value="EsxAB dimer-like"/>
    <property type="match status" value="1"/>
</dbReference>
<name>ESXB_STAA8</name>
<proteinExistence type="evidence at protein level"/>
<protein>
    <recommendedName>
        <fullName evidence="2">Type VII secretion system extracellular protein B</fullName>
        <shortName evidence="2">Ess extracellular protein B</shortName>
    </recommendedName>
</protein>
<organism>
    <name type="scientific">Staphylococcus aureus (strain NCTC 8325 / PS 47)</name>
    <dbReference type="NCBI Taxonomy" id="93061"/>
    <lineage>
        <taxon>Bacteria</taxon>
        <taxon>Bacillati</taxon>
        <taxon>Bacillota</taxon>
        <taxon>Bacilli</taxon>
        <taxon>Bacillales</taxon>
        <taxon>Staphylococcaceae</taxon>
        <taxon>Staphylococcus</taxon>
    </lineage>
</organism>
<sequence>MGGYKGIKADGGKVDQAKQLAAKTAKDIEACQKQTQQLAEYIEGSDWEGQFANKVKDVLLIMAKFQEELVQPMADHQKAIDNLSQNLAKYDTLSIKQGLDRVNP</sequence>
<feature type="chain" id="PRO_0000438302" description="Type VII secretion system extracellular protein B">
    <location>
        <begin position="1"/>
        <end position="104"/>
    </location>
</feature>